<sequence>MAPMGIRLSPLGVAVFCLLGLGVLYHLYSGFLAGRFSLFGLGGEPGGGAAGPAAAADGGTVDLREMLAVSVLAAVRGGDEVRRVRESNVLHEKSKGKTREGAEDKMTSGDVLSNRKMFYLLKTAFPSVQINTEEHVDAADQEVILWDHKIPEDILKEVTTPKEVPAESVTVWIDPLDATQEYTEDLRKYVTTMVCVAVNGKPMLGVIHKPFSEYTAWAMVDGGSNVKARSSYNEKTPRIVVSRSHSGMVKQVALQTFGNQTTIIPAGGAGYKVLALLDVPDKSQEKADLYIHVTYIKKWDICAGNAILKALGGHMTTLSGEEISYTGSDGIEGGLLASIRMNHQALVRKLPDLEKTGHK</sequence>
<name>IMPA3_HUMAN</name>
<evidence type="ECO:0000250" key="1"/>
<evidence type="ECO:0000250" key="2">
    <source>
        <dbReference type="UniProtKB" id="Q80V26"/>
    </source>
</evidence>
<evidence type="ECO:0000250" key="3">
    <source>
        <dbReference type="UniProtKB" id="Q9Z1N4"/>
    </source>
</evidence>
<evidence type="ECO:0000255" key="4"/>
<evidence type="ECO:0000256" key="5">
    <source>
        <dbReference type="SAM" id="MobiDB-lite"/>
    </source>
</evidence>
<evidence type="ECO:0000269" key="6">
    <source>
    </source>
</evidence>
<evidence type="ECO:0000269" key="7">
    <source>
    </source>
</evidence>
<evidence type="ECO:0000269" key="8">
    <source>
    </source>
</evidence>
<evidence type="ECO:0000303" key="9">
    <source ref="1"/>
</evidence>
<evidence type="ECO:0000305" key="10"/>
<evidence type="ECO:0000305" key="11">
    <source>
    </source>
</evidence>
<evidence type="ECO:0000312" key="12">
    <source>
        <dbReference type="HGNC" id="HGNC:26019"/>
    </source>
</evidence>
<feature type="chain" id="PRO_0000289041" description="Golgi-resident adenosine 3',5'-bisphosphate 3'-phosphatase">
    <location>
        <begin position="1"/>
        <end position="359"/>
    </location>
</feature>
<feature type="topological domain" description="Cytoplasmic" evidence="4">
    <location>
        <begin position="1"/>
        <end position="12"/>
    </location>
</feature>
<feature type="transmembrane region" description="Helical" evidence="4">
    <location>
        <begin position="13"/>
        <end position="33"/>
    </location>
</feature>
<feature type="topological domain" description="Lumenal" evidence="4">
    <location>
        <begin position="34"/>
        <end position="359"/>
    </location>
</feature>
<feature type="region of interest" description="Disordered" evidence="5">
    <location>
        <begin position="86"/>
        <end position="106"/>
    </location>
</feature>
<feature type="active site" description="Proton acceptor" evidence="3">
    <location>
        <position position="110"/>
    </location>
</feature>
<feature type="active site" description="Proton acceptor" evidence="3">
    <location>
        <position position="179"/>
    </location>
</feature>
<feature type="binding site" evidence="3">
    <location>
        <position position="133"/>
    </location>
    <ligand>
        <name>Mg(2+)</name>
        <dbReference type="ChEBI" id="CHEBI:18420"/>
        <label>1</label>
    </ligand>
</feature>
<feature type="binding site" evidence="3">
    <location>
        <position position="133"/>
    </location>
    <ligand>
        <name>Mg(2+)</name>
        <dbReference type="ChEBI" id="CHEBI:18420"/>
        <label>3</label>
    </ligand>
</feature>
<feature type="binding site" evidence="3">
    <location>
        <position position="174"/>
    </location>
    <ligand>
        <name>Mg(2+)</name>
        <dbReference type="ChEBI" id="CHEBI:18420"/>
        <label>1</label>
    </ligand>
</feature>
<feature type="binding site" evidence="3">
    <location>
        <position position="174"/>
    </location>
    <ligand>
        <name>Mg(2+)</name>
        <dbReference type="ChEBI" id="CHEBI:18420"/>
        <label>2</label>
    </ligand>
</feature>
<feature type="binding site" evidence="3">
    <location>
        <position position="176"/>
    </location>
    <ligand>
        <name>Mg(2+)</name>
        <dbReference type="ChEBI" id="CHEBI:18420"/>
        <label>1</label>
    </ligand>
</feature>
<feature type="binding site" evidence="3">
    <location>
        <position position="177"/>
    </location>
    <ligand>
        <name>Mg(2+)</name>
        <dbReference type="ChEBI" id="CHEBI:18420"/>
        <label>2</label>
    </ligand>
</feature>
<feature type="binding site" evidence="3">
    <location>
        <position position="242"/>
    </location>
    <ligand>
        <name>AMP</name>
        <dbReference type="ChEBI" id="CHEBI:456215"/>
    </ligand>
</feature>
<feature type="binding site" evidence="3">
    <location>
        <position position="245"/>
    </location>
    <ligand>
        <name>AMP</name>
        <dbReference type="ChEBI" id="CHEBI:456215"/>
    </ligand>
</feature>
<feature type="binding site" evidence="3">
    <location>
        <position position="268"/>
    </location>
    <ligand>
        <name>AMP</name>
        <dbReference type="ChEBI" id="CHEBI:456215"/>
    </ligand>
</feature>
<feature type="binding site" evidence="3">
    <location>
        <position position="272"/>
    </location>
    <ligand>
        <name>AMP</name>
        <dbReference type="ChEBI" id="CHEBI:456215"/>
    </ligand>
</feature>
<feature type="binding site" evidence="3">
    <location>
        <position position="300"/>
    </location>
    <ligand>
        <name>Mg(2+)</name>
        <dbReference type="ChEBI" id="CHEBI:18420"/>
        <label>2</label>
    </ligand>
</feature>
<feature type="modified residue" description="N-acetylmethionine" evidence="8">
    <location>
        <position position="1"/>
    </location>
</feature>
<feature type="glycosylation site" description="N-linked (GlcNAc...) asparagine" evidence="11">
    <location>
        <position position="259"/>
    </location>
</feature>
<feature type="sequence variant" id="VAR_065847" description="In CDP-GPAPP; dbSNP:rs387907101." evidence="7">
    <original>D</original>
    <variation>N</variation>
    <location>
        <position position="177"/>
    </location>
</feature>
<feature type="sequence variant" id="VAR_065848" description="In CDP-GPAPP; dbSNP:rs387907102." evidence="7">
    <original>T</original>
    <variation>P</variation>
    <location>
        <position position="183"/>
    </location>
</feature>
<feature type="sequence conflict" description="In Ref. 3; AAH67814." evidence="10" ref="3">
    <original>G</original>
    <variation>E</variation>
    <location>
        <position position="51"/>
    </location>
</feature>
<feature type="sequence conflict" description="In Ref. 3; AAH67814." evidence="10" ref="3">
    <original>T</original>
    <variation>A</variation>
    <location>
        <position position="123"/>
    </location>
</feature>
<feature type="sequence conflict" description="In Ref. 3; AAH67814." evidence="10" ref="3">
    <original>K</original>
    <variation>E</variation>
    <location>
        <position position="156"/>
    </location>
</feature>
<reference key="1">
    <citation type="submission" date="2001-04" db="EMBL/GenBank/DDBJ databases">
        <title>Molecular cloning and expression of human myo-inositol monophosphatase A3 cDNA (IMPA3).</title>
        <authorList>
            <person name="Parthasarathy L."/>
            <person name="Parthasarathy R."/>
        </authorList>
    </citation>
    <scope>NUCLEOTIDE SEQUENCE [MRNA]</scope>
</reference>
<reference key="2">
    <citation type="journal article" date="2004" name="Nat. Genet.">
        <title>Complete sequencing and characterization of 21,243 full-length human cDNAs.</title>
        <authorList>
            <person name="Ota T."/>
            <person name="Suzuki Y."/>
            <person name="Nishikawa T."/>
            <person name="Otsuki T."/>
            <person name="Sugiyama T."/>
            <person name="Irie R."/>
            <person name="Wakamatsu A."/>
            <person name="Hayashi K."/>
            <person name="Sato H."/>
            <person name="Nagai K."/>
            <person name="Kimura K."/>
            <person name="Makita H."/>
            <person name="Sekine M."/>
            <person name="Obayashi M."/>
            <person name="Nishi T."/>
            <person name="Shibahara T."/>
            <person name="Tanaka T."/>
            <person name="Ishii S."/>
            <person name="Yamamoto J."/>
            <person name="Saito K."/>
            <person name="Kawai Y."/>
            <person name="Isono Y."/>
            <person name="Nakamura Y."/>
            <person name="Nagahari K."/>
            <person name="Murakami K."/>
            <person name="Yasuda T."/>
            <person name="Iwayanagi T."/>
            <person name="Wagatsuma M."/>
            <person name="Shiratori A."/>
            <person name="Sudo H."/>
            <person name="Hosoiri T."/>
            <person name="Kaku Y."/>
            <person name="Kodaira H."/>
            <person name="Kondo H."/>
            <person name="Sugawara M."/>
            <person name="Takahashi M."/>
            <person name="Kanda K."/>
            <person name="Yokoi T."/>
            <person name="Furuya T."/>
            <person name="Kikkawa E."/>
            <person name="Omura Y."/>
            <person name="Abe K."/>
            <person name="Kamihara K."/>
            <person name="Katsuta N."/>
            <person name="Sato K."/>
            <person name="Tanikawa M."/>
            <person name="Yamazaki M."/>
            <person name="Ninomiya K."/>
            <person name="Ishibashi T."/>
            <person name="Yamashita H."/>
            <person name="Murakawa K."/>
            <person name="Fujimori K."/>
            <person name="Tanai H."/>
            <person name="Kimata M."/>
            <person name="Watanabe M."/>
            <person name="Hiraoka S."/>
            <person name="Chiba Y."/>
            <person name="Ishida S."/>
            <person name="Ono Y."/>
            <person name="Takiguchi S."/>
            <person name="Watanabe S."/>
            <person name="Yosida M."/>
            <person name="Hotuta T."/>
            <person name="Kusano J."/>
            <person name="Kanehori K."/>
            <person name="Takahashi-Fujii A."/>
            <person name="Hara H."/>
            <person name="Tanase T.-O."/>
            <person name="Nomura Y."/>
            <person name="Togiya S."/>
            <person name="Komai F."/>
            <person name="Hara R."/>
            <person name="Takeuchi K."/>
            <person name="Arita M."/>
            <person name="Imose N."/>
            <person name="Musashino K."/>
            <person name="Yuuki H."/>
            <person name="Oshima A."/>
            <person name="Sasaki N."/>
            <person name="Aotsuka S."/>
            <person name="Yoshikawa Y."/>
            <person name="Matsunawa H."/>
            <person name="Ichihara T."/>
            <person name="Shiohata N."/>
            <person name="Sano S."/>
            <person name="Moriya S."/>
            <person name="Momiyama H."/>
            <person name="Satoh N."/>
            <person name="Takami S."/>
            <person name="Terashima Y."/>
            <person name="Suzuki O."/>
            <person name="Nakagawa S."/>
            <person name="Senoh A."/>
            <person name="Mizoguchi H."/>
            <person name="Goto Y."/>
            <person name="Shimizu F."/>
            <person name="Wakebe H."/>
            <person name="Hishigaki H."/>
            <person name="Watanabe T."/>
            <person name="Sugiyama A."/>
            <person name="Takemoto M."/>
            <person name="Kawakami B."/>
            <person name="Yamazaki M."/>
            <person name="Watanabe K."/>
            <person name="Kumagai A."/>
            <person name="Itakura S."/>
            <person name="Fukuzumi Y."/>
            <person name="Fujimori Y."/>
            <person name="Komiyama M."/>
            <person name="Tashiro H."/>
            <person name="Tanigami A."/>
            <person name="Fujiwara T."/>
            <person name="Ono T."/>
            <person name="Yamada K."/>
            <person name="Fujii Y."/>
            <person name="Ozaki K."/>
            <person name="Hirao M."/>
            <person name="Ohmori Y."/>
            <person name="Kawabata A."/>
            <person name="Hikiji T."/>
            <person name="Kobatake N."/>
            <person name="Inagaki H."/>
            <person name="Ikema Y."/>
            <person name="Okamoto S."/>
            <person name="Okitani R."/>
            <person name="Kawakami T."/>
            <person name="Noguchi S."/>
            <person name="Itoh T."/>
            <person name="Shigeta K."/>
            <person name="Senba T."/>
            <person name="Matsumura K."/>
            <person name="Nakajima Y."/>
            <person name="Mizuno T."/>
            <person name="Morinaga M."/>
            <person name="Sasaki M."/>
            <person name="Togashi T."/>
            <person name="Oyama M."/>
            <person name="Hata H."/>
            <person name="Watanabe M."/>
            <person name="Komatsu T."/>
            <person name="Mizushima-Sugano J."/>
            <person name="Satoh T."/>
            <person name="Shirai Y."/>
            <person name="Takahashi Y."/>
            <person name="Nakagawa K."/>
            <person name="Okumura K."/>
            <person name="Nagase T."/>
            <person name="Nomura N."/>
            <person name="Kikuchi H."/>
            <person name="Masuho Y."/>
            <person name="Yamashita R."/>
            <person name="Nakai K."/>
            <person name="Yada T."/>
            <person name="Nakamura Y."/>
            <person name="Ohara O."/>
            <person name="Isogai T."/>
            <person name="Sugano S."/>
        </authorList>
    </citation>
    <scope>NUCLEOTIDE SEQUENCE [LARGE SCALE MRNA]</scope>
</reference>
<reference key="3">
    <citation type="journal article" date="2004" name="Genome Res.">
        <title>The status, quality, and expansion of the NIH full-length cDNA project: the Mammalian Gene Collection (MGC).</title>
        <authorList>
            <consortium name="The MGC Project Team"/>
        </authorList>
    </citation>
    <scope>NUCLEOTIDE SEQUENCE [LARGE SCALE MRNA]</scope>
    <source>
        <tissue>Skin</tissue>
        <tissue>Testis</tissue>
    </source>
</reference>
<reference key="4">
    <citation type="journal article" date="2008" name="Proc. Natl. Acad. Sci. U.S.A.">
        <title>A role for a lithium-inhibited Golgi nucleotidase in skeletal development and sulfation.</title>
        <authorList>
            <person name="Frederick J.P."/>
            <person name="Tafari A.T."/>
            <person name="Wu S.M."/>
            <person name="Megosh L.C."/>
            <person name="Chiou S.T."/>
            <person name="Irving R.P."/>
            <person name="York J.D."/>
        </authorList>
    </citation>
    <scope>SUBCELLULAR LOCATION</scope>
    <scope>GLYCOSYLATION</scope>
</reference>
<reference key="5">
    <citation type="journal article" date="2011" name="BMC Syst. Biol.">
        <title>Initial characterization of the human central proteome.</title>
        <authorList>
            <person name="Burkard T.R."/>
            <person name="Planyavsky M."/>
            <person name="Kaupe I."/>
            <person name="Breitwieser F.P."/>
            <person name="Buerckstuemmer T."/>
            <person name="Bennett K.L."/>
            <person name="Superti-Furga G."/>
            <person name="Colinge J."/>
        </authorList>
    </citation>
    <scope>IDENTIFICATION BY MASS SPECTROMETRY [LARGE SCALE ANALYSIS]</scope>
</reference>
<reference key="6">
    <citation type="journal article" date="2012" name="Proc. Natl. Acad. Sci. U.S.A.">
        <title>N-terminal acetylome analyses and functional insights of the N-terminal acetyltransferase NatB.</title>
        <authorList>
            <person name="Van Damme P."/>
            <person name="Lasa M."/>
            <person name="Polevoda B."/>
            <person name="Gazquez C."/>
            <person name="Elosegui-Artola A."/>
            <person name="Kim D.S."/>
            <person name="De Juan-Pardo E."/>
            <person name="Demeyer K."/>
            <person name="Hole K."/>
            <person name="Larrea E."/>
            <person name="Timmerman E."/>
            <person name="Prieto J."/>
            <person name="Arnesen T."/>
            <person name="Sherman F."/>
            <person name="Gevaert K."/>
            <person name="Aldabe R."/>
        </authorList>
    </citation>
    <scope>IDENTIFICATION BY MASS SPECTROMETRY [LARGE SCALE ANALYSIS]</scope>
</reference>
<reference key="7">
    <citation type="journal article" date="2015" name="Cell Rep.">
        <title>An organellar nalpha-acetyltransferase, naa60, acetylates cytosolic N termini of transmembrane proteins and maintains Golgi integrity.</title>
        <authorList>
            <person name="Aksnes H."/>
            <person name="Van Damme P."/>
            <person name="Goris M."/>
            <person name="Starheim K.K."/>
            <person name="Marie M."/>
            <person name="Stoeve S.I."/>
            <person name="Hoel C."/>
            <person name="Kalvik T.V."/>
            <person name="Hole K."/>
            <person name="Glomnes N."/>
            <person name="Furnes C."/>
            <person name="Ljostveit S."/>
            <person name="Ziegler M."/>
            <person name="Niere M."/>
            <person name="Gevaert K."/>
            <person name="Arnesen T."/>
        </authorList>
    </citation>
    <scope>ACETYLATION AT MET-1</scope>
</reference>
<reference key="8">
    <citation type="journal article" date="2015" name="Proteomics">
        <title>N-terminome analysis of the human mitochondrial proteome.</title>
        <authorList>
            <person name="Vaca Jacome A.S."/>
            <person name="Rabilloud T."/>
            <person name="Schaeffer-Reiss C."/>
            <person name="Rompais M."/>
            <person name="Ayoub D."/>
            <person name="Lane L."/>
            <person name="Bairoch A."/>
            <person name="Van Dorsselaer A."/>
            <person name="Carapito C."/>
        </authorList>
    </citation>
    <scope>IDENTIFICATION BY MASS SPECTROMETRY [LARGE SCALE ANALYSIS]</scope>
</reference>
<reference key="9">
    <citation type="journal article" date="2011" name="Am. J. Hum. Genet.">
        <title>Chondrodysplasia and abnormal joint development associated with mutations in IMPAD1, encoding the Golgi-resident nucleotide phosphatase, gPAPP.</title>
        <authorList>
            <person name="Vissers L.E."/>
            <person name="Lausch E."/>
            <person name="Unger S."/>
            <person name="Campos-Xavier A.B."/>
            <person name="Gilissen C."/>
            <person name="Rossi A."/>
            <person name="Del Rosario M."/>
            <person name="Venselaar H."/>
            <person name="Knoll U."/>
            <person name="Nampoothiri S."/>
            <person name="Nair M."/>
            <person name="Spranger J."/>
            <person name="Brunner H.G."/>
            <person name="Bonafe L."/>
            <person name="Veltman J.A."/>
            <person name="Zabel B."/>
            <person name="Superti-Furga A."/>
        </authorList>
    </citation>
    <scope>VARIANTS CDP-GPAPP ASN-177 AND PRO-183</scope>
</reference>
<comment type="function">
    <text evidence="2">Exhibits 3'-nucleotidase activity toward adenosine 3',5'-bisphosphate (PAP), namely hydrolyzes adenosine 3',5'-bisphosphate into adenosine 5'-monophosphate (AMP) and a phosphate. May play a role in the formation of skeletal elements derived through endochondral ossification, possibly by clearing adenosine 3',5'-bisphosphate produced by Golgi sulfotransferases during glycosaminoglycan sulfation. Has no activity toward 3'-phosphoadenosine 5'-phosphosulfate (PAPS) or inositol phosphate (IP) substrates including I(1)P, I(1,4)P2, I(1,3,4)P3, I(1,4,5)P3 and I(1,3,4,5)P4.</text>
</comment>
<comment type="catalytic activity">
    <reaction evidence="2">
        <text>adenosine 3',5'-bisphosphate + H2O = AMP + phosphate</text>
        <dbReference type="Rhea" id="RHEA:10040"/>
        <dbReference type="ChEBI" id="CHEBI:15377"/>
        <dbReference type="ChEBI" id="CHEBI:43474"/>
        <dbReference type="ChEBI" id="CHEBI:58343"/>
        <dbReference type="ChEBI" id="CHEBI:456215"/>
        <dbReference type="EC" id="3.1.3.7"/>
    </reaction>
</comment>
<comment type="cofactor">
    <cofactor evidence="1">
        <name>Mg(2+)</name>
        <dbReference type="ChEBI" id="CHEBI:18420"/>
    </cofactor>
</comment>
<comment type="activity regulation">
    <text evidence="2">Strongly inhibited by lithium.</text>
</comment>
<comment type="pathway">
    <text evidence="2">Sulfur metabolism.</text>
</comment>
<comment type="subcellular location">
    <subcellularLocation>
        <location evidence="6">Golgi apparatus</location>
    </subcellularLocation>
    <subcellularLocation>
        <location evidence="6">Golgi apparatus</location>
        <location evidence="6">trans-Golgi network membrane</location>
        <topology evidence="4 6">Single-pass type II membrane protein</topology>
    </subcellularLocation>
    <text evidence="6">The catalytic core is predicted to reside within the Golgi lumen.</text>
</comment>
<comment type="PTM">
    <text evidence="6">Contains N-linked glycan resistant to endoglycosydase H.</text>
</comment>
<comment type="disease" evidence="7">
    <disease id="DI-03139">
        <name>Chondrodysplasia with joint dislocations, GPAPP type</name>
        <acronym>CDP-GPAPP</acronym>
        <description>A condition consisting of congenital joint dislocations, chondrodysplasia with short stature, micrognathia and cleft palate, and a distinctive face.</description>
        <dbReference type="MIM" id="614078"/>
    </disease>
    <text>The disease is caused by variants affecting the gene represented in this entry.</text>
</comment>
<comment type="similarity">
    <text evidence="10">Belongs to the inositol monophosphatase superfamily.</text>
</comment>
<protein>
    <recommendedName>
        <fullName evidence="2">Golgi-resident adenosine 3',5'-bisphosphate 3'-phosphatase</fullName>
        <shortName evidence="2">Golgi-resident PAP phosphatase</shortName>
        <shortName evidence="2">gPAPP</shortName>
        <ecNumber evidence="2">3.1.3.7</ecNumber>
    </recommendedName>
    <alternativeName>
        <fullName evidence="12">3'(2'), 5'-bisphosphate nucleotidase 2</fullName>
    </alternativeName>
    <alternativeName>
        <fullName evidence="2">Inositol monophosphatase domain-containing protein 1</fullName>
    </alternativeName>
    <alternativeName>
        <fullName evidence="9">Myo-inositol monophosphatase A3</fullName>
    </alternativeName>
    <alternativeName>
        <fullName evidence="2">Phosphoadenosine phosphate 3'-nucleotidase</fullName>
    </alternativeName>
</protein>
<proteinExistence type="evidence at protein level"/>
<keyword id="KW-0007">Acetylation</keyword>
<keyword id="KW-0225">Disease variant</keyword>
<keyword id="KW-0325">Glycoprotein</keyword>
<keyword id="KW-0333">Golgi apparatus</keyword>
<keyword id="KW-0378">Hydrolase</keyword>
<keyword id="KW-0460">Magnesium</keyword>
<keyword id="KW-0472">Membrane</keyword>
<keyword id="KW-0479">Metal-binding</keyword>
<keyword id="KW-1267">Proteomics identification</keyword>
<keyword id="KW-1185">Reference proteome</keyword>
<keyword id="KW-0735">Signal-anchor</keyword>
<keyword id="KW-0812">Transmembrane</keyword>
<keyword id="KW-1133">Transmembrane helix</keyword>
<gene>
    <name evidence="12" type="primary">BPNT2</name>
    <name type="synonym">IMPA3</name>
    <name type="synonym">IMPAD1</name>
</gene>
<accession>Q9NX62</accession>
<accession>Q6NVY7</accession>
<organism>
    <name type="scientific">Homo sapiens</name>
    <name type="common">Human</name>
    <dbReference type="NCBI Taxonomy" id="9606"/>
    <lineage>
        <taxon>Eukaryota</taxon>
        <taxon>Metazoa</taxon>
        <taxon>Chordata</taxon>
        <taxon>Craniata</taxon>
        <taxon>Vertebrata</taxon>
        <taxon>Euteleostomi</taxon>
        <taxon>Mammalia</taxon>
        <taxon>Eutheria</taxon>
        <taxon>Euarchontoglires</taxon>
        <taxon>Primates</taxon>
        <taxon>Haplorrhini</taxon>
        <taxon>Catarrhini</taxon>
        <taxon>Hominidae</taxon>
        <taxon>Homo</taxon>
    </lineage>
</organism>
<dbReference type="EC" id="3.1.3.7" evidence="2"/>
<dbReference type="EMBL" id="AK000428">
    <property type="protein sequence ID" value="BAA91158.1"/>
    <property type="molecule type" value="mRNA"/>
</dbReference>
<dbReference type="EMBL" id="AY032885">
    <property type="protein sequence ID" value="AAK52336.1"/>
    <property type="molecule type" value="mRNA"/>
</dbReference>
<dbReference type="EMBL" id="BC017797">
    <property type="protein sequence ID" value="AAH17797.1"/>
    <property type="molecule type" value="mRNA"/>
</dbReference>
<dbReference type="EMBL" id="BC067814">
    <property type="protein sequence ID" value="AAH67814.1"/>
    <property type="molecule type" value="mRNA"/>
</dbReference>
<dbReference type="CCDS" id="CCDS6169.1"/>
<dbReference type="RefSeq" id="NP_060283.3">
    <property type="nucleotide sequence ID" value="NM_017813.4"/>
</dbReference>
<dbReference type="SMR" id="Q9NX62"/>
<dbReference type="BioGRID" id="120268">
    <property type="interactions" value="56"/>
</dbReference>
<dbReference type="FunCoup" id="Q9NX62">
    <property type="interactions" value="2447"/>
</dbReference>
<dbReference type="IntAct" id="Q9NX62">
    <property type="interactions" value="37"/>
</dbReference>
<dbReference type="MINT" id="Q9NX62"/>
<dbReference type="STRING" id="9606.ENSP00000262644"/>
<dbReference type="DEPOD" id="IMPAD1"/>
<dbReference type="GlyConnect" id="1400">
    <property type="glycosylation" value="14 N-Linked glycans (1 site)"/>
</dbReference>
<dbReference type="GlyCosmos" id="Q9NX62">
    <property type="glycosylation" value="2 sites, 14 glycans"/>
</dbReference>
<dbReference type="GlyGen" id="Q9NX62">
    <property type="glycosylation" value="4 sites, 13 N-linked glycans (1 site), 3 O-linked glycans (3 sites)"/>
</dbReference>
<dbReference type="iPTMnet" id="Q9NX62"/>
<dbReference type="MetOSite" id="Q9NX62"/>
<dbReference type="PhosphoSitePlus" id="Q9NX62"/>
<dbReference type="SwissPalm" id="Q9NX62"/>
<dbReference type="BioMuta" id="IMPAD1"/>
<dbReference type="DMDM" id="74734687"/>
<dbReference type="jPOST" id="Q9NX62"/>
<dbReference type="MassIVE" id="Q9NX62"/>
<dbReference type="PaxDb" id="9606-ENSP00000262644"/>
<dbReference type="PeptideAtlas" id="Q9NX62"/>
<dbReference type="ProteomicsDB" id="83047"/>
<dbReference type="Pumba" id="Q9NX62"/>
<dbReference type="Antibodypedia" id="2290">
    <property type="antibodies" value="106 antibodies from 24 providers"/>
</dbReference>
<dbReference type="DNASU" id="54928"/>
<dbReference type="Ensembl" id="ENST00000262644.9">
    <property type="protein sequence ID" value="ENSP00000262644.4"/>
    <property type="gene ID" value="ENSG00000104331.9"/>
</dbReference>
<dbReference type="GeneID" id="54928"/>
<dbReference type="KEGG" id="hsa:54928"/>
<dbReference type="MANE-Select" id="ENST00000262644.9">
    <property type="protein sequence ID" value="ENSP00000262644.4"/>
    <property type="RefSeq nucleotide sequence ID" value="NM_017813.5"/>
    <property type="RefSeq protein sequence ID" value="NP_060283.3"/>
</dbReference>
<dbReference type="UCSC" id="uc003xte.5">
    <property type="organism name" value="human"/>
</dbReference>
<dbReference type="AGR" id="HGNC:26019"/>
<dbReference type="CTD" id="54928"/>
<dbReference type="DisGeNET" id="54928"/>
<dbReference type="GeneCards" id="BPNT2"/>
<dbReference type="HGNC" id="HGNC:26019">
    <property type="gene designation" value="BPNT2"/>
</dbReference>
<dbReference type="HPA" id="ENSG00000104331">
    <property type="expression patterns" value="Low tissue specificity"/>
</dbReference>
<dbReference type="MalaCards" id="BPNT2"/>
<dbReference type="MIM" id="614010">
    <property type="type" value="gene"/>
</dbReference>
<dbReference type="MIM" id="614078">
    <property type="type" value="phenotype"/>
</dbReference>
<dbReference type="neXtProt" id="NX_Q9NX62"/>
<dbReference type="OpenTargets" id="ENSG00000104331"/>
<dbReference type="Orphanet" id="280586">
    <property type="disease" value="Chondrodysplasia with joint dislocations, gPAPP type"/>
</dbReference>
<dbReference type="VEuPathDB" id="HostDB:ENSG00000104331"/>
<dbReference type="eggNOG" id="KOG3853">
    <property type="taxonomic scope" value="Eukaryota"/>
</dbReference>
<dbReference type="GeneTree" id="ENSGT00940000160216"/>
<dbReference type="HOGENOM" id="CLU_034742_0_0_1"/>
<dbReference type="InParanoid" id="Q9NX62"/>
<dbReference type="OMA" id="VKQVAWQ"/>
<dbReference type="OrthoDB" id="74460at2759"/>
<dbReference type="PAN-GO" id="Q9NX62">
    <property type="GO annotations" value="3 GO annotations based on evolutionary models"/>
</dbReference>
<dbReference type="PhylomeDB" id="Q9NX62"/>
<dbReference type="TreeFam" id="TF314300"/>
<dbReference type="BioCyc" id="MetaCyc:HS02567-MONOMER"/>
<dbReference type="PathwayCommons" id="Q9NX62"/>
<dbReference type="Reactome" id="R-HSA-156584">
    <property type="pathway name" value="Cytosolic sulfonation of small molecules"/>
</dbReference>
<dbReference type="SignaLink" id="Q9NX62"/>
<dbReference type="BioGRID-ORCS" id="54928">
    <property type="hits" value="23 hits in 1153 CRISPR screens"/>
</dbReference>
<dbReference type="ChiTaRS" id="IMPAD1">
    <property type="organism name" value="human"/>
</dbReference>
<dbReference type="GenomeRNAi" id="54928"/>
<dbReference type="Pharos" id="Q9NX62">
    <property type="development level" value="Tbio"/>
</dbReference>
<dbReference type="PRO" id="PR:Q9NX62"/>
<dbReference type="Proteomes" id="UP000005640">
    <property type="component" value="Chromosome 8"/>
</dbReference>
<dbReference type="RNAct" id="Q9NX62">
    <property type="molecule type" value="protein"/>
</dbReference>
<dbReference type="Bgee" id="ENSG00000104331">
    <property type="expression patterns" value="Expressed in medial globus pallidus and 204 other cell types or tissues"/>
</dbReference>
<dbReference type="ExpressionAtlas" id="Q9NX62">
    <property type="expression patterns" value="baseline and differential"/>
</dbReference>
<dbReference type="GO" id="GO:0005829">
    <property type="term" value="C:cytosol"/>
    <property type="evidence" value="ECO:0000314"/>
    <property type="project" value="HPA"/>
</dbReference>
<dbReference type="GO" id="GO:0012505">
    <property type="term" value="C:endomembrane system"/>
    <property type="evidence" value="ECO:0000318"/>
    <property type="project" value="GO_Central"/>
</dbReference>
<dbReference type="GO" id="GO:0005794">
    <property type="term" value="C:Golgi apparatus"/>
    <property type="evidence" value="ECO:0000314"/>
    <property type="project" value="MGI"/>
</dbReference>
<dbReference type="GO" id="GO:0005796">
    <property type="term" value="C:Golgi lumen"/>
    <property type="evidence" value="ECO:0000304"/>
    <property type="project" value="Reactome"/>
</dbReference>
<dbReference type="GO" id="GO:0016020">
    <property type="term" value="C:membrane"/>
    <property type="evidence" value="ECO:0007005"/>
    <property type="project" value="UniProtKB"/>
</dbReference>
<dbReference type="GO" id="GO:0016604">
    <property type="term" value="C:nuclear body"/>
    <property type="evidence" value="ECO:0000314"/>
    <property type="project" value="HPA"/>
</dbReference>
<dbReference type="GO" id="GO:0005654">
    <property type="term" value="C:nucleoplasm"/>
    <property type="evidence" value="ECO:0000314"/>
    <property type="project" value="HPA"/>
</dbReference>
<dbReference type="GO" id="GO:0032588">
    <property type="term" value="C:trans-Golgi network membrane"/>
    <property type="evidence" value="ECO:0000250"/>
    <property type="project" value="UniProtKB"/>
</dbReference>
<dbReference type="GO" id="GO:0008441">
    <property type="term" value="F:3'(2'),5'-bisphosphate nucleotidase activity"/>
    <property type="evidence" value="ECO:0007669"/>
    <property type="project" value="UniProtKB-EC"/>
</dbReference>
<dbReference type="GO" id="GO:0097657">
    <property type="term" value="F:3',5'-nucleotide bisphosphate phosphatase activity"/>
    <property type="evidence" value="ECO:0000250"/>
    <property type="project" value="UniProtKB"/>
</dbReference>
<dbReference type="GO" id="GO:0008254">
    <property type="term" value="F:3'-nucleotidase activity"/>
    <property type="evidence" value="ECO:0000318"/>
    <property type="project" value="GO_Central"/>
</dbReference>
<dbReference type="GO" id="GO:0046872">
    <property type="term" value="F:metal ion binding"/>
    <property type="evidence" value="ECO:0007669"/>
    <property type="project" value="UniProtKB-KW"/>
</dbReference>
<dbReference type="GO" id="GO:0002063">
    <property type="term" value="P:chondrocyte development"/>
    <property type="evidence" value="ECO:0007669"/>
    <property type="project" value="Ensembl"/>
</dbReference>
<dbReference type="GO" id="GO:0042733">
    <property type="term" value="P:embryonic digit morphogenesis"/>
    <property type="evidence" value="ECO:0007669"/>
    <property type="project" value="Ensembl"/>
</dbReference>
<dbReference type="GO" id="GO:0001958">
    <property type="term" value="P:endochondral ossification"/>
    <property type="evidence" value="ECO:0007669"/>
    <property type="project" value="Ensembl"/>
</dbReference>
<dbReference type="GO" id="GO:0046854">
    <property type="term" value="P:phosphatidylinositol phosphate biosynthetic process"/>
    <property type="evidence" value="ECO:0007669"/>
    <property type="project" value="InterPro"/>
</dbReference>
<dbReference type="GO" id="GO:0009791">
    <property type="term" value="P:post-embryonic development"/>
    <property type="evidence" value="ECO:0007669"/>
    <property type="project" value="Ensembl"/>
</dbReference>
<dbReference type="GO" id="GO:0001501">
    <property type="term" value="P:skeletal system development"/>
    <property type="evidence" value="ECO:0000318"/>
    <property type="project" value="GO_Central"/>
</dbReference>
<dbReference type="CDD" id="cd01640">
    <property type="entry name" value="IPPase"/>
    <property type="match status" value="1"/>
</dbReference>
<dbReference type="FunFam" id="3.30.540.10:FF:000012">
    <property type="entry name" value="Blast:Putative inositol monophosphatase 3"/>
    <property type="match status" value="1"/>
</dbReference>
<dbReference type="FunFam" id="3.40.190.80:FF:000007">
    <property type="entry name" value="Blast:Putative inositol monophosphatase 3"/>
    <property type="match status" value="1"/>
</dbReference>
<dbReference type="Gene3D" id="3.40.190.80">
    <property type="match status" value="1"/>
</dbReference>
<dbReference type="Gene3D" id="3.30.540.10">
    <property type="entry name" value="Fructose-1,6-Bisphosphatase, subunit A, domain 1"/>
    <property type="match status" value="1"/>
</dbReference>
<dbReference type="InterPro" id="IPR050725">
    <property type="entry name" value="CysQ/Inositol_MonoPase"/>
</dbReference>
<dbReference type="InterPro" id="IPR000760">
    <property type="entry name" value="Inositol_monophosphatase-like"/>
</dbReference>
<dbReference type="InterPro" id="IPR020550">
    <property type="entry name" value="Inositol_monophosphatase_CS"/>
</dbReference>
<dbReference type="PANTHER" id="PTHR43028">
    <property type="entry name" value="3'(2'),5'-BISPHOSPHATE NUCLEOTIDASE 1"/>
    <property type="match status" value="1"/>
</dbReference>
<dbReference type="PANTHER" id="PTHR43028:SF6">
    <property type="entry name" value="GOLGI-RESIDENT ADENOSINE 3',5'-BISPHOSPHATE 3'-PHOSPHATASE"/>
    <property type="match status" value="1"/>
</dbReference>
<dbReference type="Pfam" id="PF00459">
    <property type="entry name" value="Inositol_P"/>
    <property type="match status" value="1"/>
</dbReference>
<dbReference type="SUPFAM" id="SSF56655">
    <property type="entry name" value="Carbohydrate phosphatase"/>
    <property type="match status" value="1"/>
</dbReference>
<dbReference type="PROSITE" id="PS00630">
    <property type="entry name" value="IMP_2"/>
    <property type="match status" value="1"/>
</dbReference>